<evidence type="ECO:0000250" key="1">
    <source>
        <dbReference type="UniProtKB" id="P0C1Z0"/>
    </source>
</evidence>
<evidence type="ECO:0000269" key="2">
    <source>
    </source>
</evidence>
<evidence type="ECO:0000305" key="3"/>
<organism>
    <name type="scientific">Dendroaspis viridis</name>
    <name type="common">Western green mamba</name>
    <dbReference type="NCBI Taxonomy" id="8621"/>
    <lineage>
        <taxon>Eukaryota</taxon>
        <taxon>Metazoa</taxon>
        <taxon>Chordata</taxon>
        <taxon>Craniata</taxon>
        <taxon>Vertebrata</taxon>
        <taxon>Euteleostomi</taxon>
        <taxon>Lepidosauria</taxon>
        <taxon>Squamata</taxon>
        <taxon>Bifurcata</taxon>
        <taxon>Unidentata</taxon>
        <taxon>Episquamata</taxon>
        <taxon>Toxicofera</taxon>
        <taxon>Serpentes</taxon>
        <taxon>Colubroidea</taxon>
        <taxon>Elapidae</taxon>
        <taxon>Elapinae</taxon>
        <taxon>Dendroaspis</taxon>
    </lineage>
</organism>
<comment type="subcellular location">
    <subcellularLocation>
        <location evidence="2">Secreted</location>
    </subcellularLocation>
</comment>
<comment type="tissue specificity">
    <text evidence="3">Expressed by the venom gland.</text>
</comment>
<comment type="toxic dose">
    <text evidence="2">LD(50) is &gt;3.3 mg/kg by intraperitoneal injection.</text>
</comment>
<comment type="similarity">
    <text evidence="3">Belongs to the three-finger toxin family. Short-chain subfamily. Orphan group XI sub-subfamily.</text>
</comment>
<reference key="1">
    <citation type="journal article" date="1974" name="Eur. J. Biochem.">
        <title>The amino-acid sequence of a polypeptide from the venom of Dendroaspis viridis.</title>
        <authorList>
            <person name="Shipolini R.A."/>
            <person name="Banks B.E.C."/>
        </authorList>
    </citation>
    <scope>PROTEIN SEQUENCE</scope>
    <scope>TOXIC DOSE</scope>
    <scope>SUBCELLULAR LOCATION</scope>
    <source>
        <tissue>Venom</tissue>
    </source>
</reference>
<feature type="chain" id="PRO_0000093664" description="Toxin 4.9.6" evidence="2">
    <location>
        <begin position="1"/>
        <end position="60"/>
    </location>
</feature>
<feature type="disulfide bond" evidence="1">
    <location>
        <begin position="3"/>
        <end position="22"/>
    </location>
</feature>
<feature type="disulfide bond" evidence="1">
    <location>
        <begin position="17"/>
        <end position="38"/>
    </location>
</feature>
<feature type="disulfide bond" evidence="1">
    <location>
        <begin position="40"/>
        <end position="52"/>
    </location>
</feature>
<feature type="disulfide bond" evidence="1">
    <location>
        <begin position="53"/>
        <end position="58"/>
    </location>
</feature>
<name>3SOB6_DENVI</name>
<protein>
    <recommendedName>
        <fullName>Toxin 4.9.6</fullName>
    </recommendedName>
</protein>
<proteinExistence type="evidence at protein level"/>
<sequence length="60" mass="6800">MICYSHKTPQNSATITCEEKTCYKFVTKLPGVILARGCGCPKKEIFRKSIHCCRSDKCNE</sequence>
<keyword id="KW-0903">Direct protein sequencing</keyword>
<keyword id="KW-1015">Disulfide bond</keyword>
<keyword id="KW-0964">Secreted</keyword>
<keyword id="KW-0800">Toxin</keyword>
<accession>P01405</accession>
<dbReference type="PIR" id="A01676">
    <property type="entry name" value="T5EP2V"/>
</dbReference>
<dbReference type="SMR" id="P01405"/>
<dbReference type="GO" id="GO:0005576">
    <property type="term" value="C:extracellular region"/>
    <property type="evidence" value="ECO:0007669"/>
    <property type="project" value="UniProtKB-SubCell"/>
</dbReference>
<dbReference type="GO" id="GO:0090729">
    <property type="term" value="F:toxin activity"/>
    <property type="evidence" value="ECO:0007669"/>
    <property type="project" value="UniProtKB-KW"/>
</dbReference>
<dbReference type="CDD" id="cd00206">
    <property type="entry name" value="TFP_snake_toxin"/>
    <property type="match status" value="1"/>
</dbReference>
<dbReference type="Gene3D" id="2.10.60.10">
    <property type="entry name" value="CD59"/>
    <property type="match status" value="1"/>
</dbReference>
<dbReference type="InterPro" id="IPR003571">
    <property type="entry name" value="Snake_3FTx"/>
</dbReference>
<dbReference type="InterPro" id="IPR045860">
    <property type="entry name" value="Snake_toxin-like_sf"/>
</dbReference>
<dbReference type="InterPro" id="IPR018354">
    <property type="entry name" value="Snake_toxin_con_site"/>
</dbReference>
<dbReference type="InterPro" id="IPR054131">
    <property type="entry name" value="Toxin_cobra-type"/>
</dbReference>
<dbReference type="Pfam" id="PF21947">
    <property type="entry name" value="Toxin_cobra-type"/>
    <property type="match status" value="1"/>
</dbReference>
<dbReference type="SUPFAM" id="SSF57302">
    <property type="entry name" value="Snake toxin-like"/>
    <property type="match status" value="1"/>
</dbReference>
<dbReference type="PROSITE" id="PS00272">
    <property type="entry name" value="SNAKE_TOXIN"/>
    <property type="match status" value="1"/>
</dbReference>